<keyword id="KW-0963">Cytoplasm</keyword>
<keyword id="KW-0217">Developmental protein</keyword>
<keyword id="KW-0221">Differentiation</keyword>
<keyword id="KW-0333">Golgi apparatus</keyword>
<keyword id="KW-0472">Membrane</keyword>
<keyword id="KW-0496">Mitochondrion</keyword>
<keyword id="KW-1185">Reference proteome</keyword>
<keyword id="KW-0744">Spermatogenesis</keyword>
<gene>
    <name type="primary">Ggnbp1</name>
</gene>
<proteinExistence type="evidence at protein level"/>
<comment type="function">
    <text evidence="5">Induces mitochondrial fragmentation, possibly by promoting DNM1L-dependent fission and may play a role in mitochondrial morphogenesis during spermatogenesis.</text>
</comment>
<comment type="subunit">
    <text evidence="3 4 6">Interacts with CCDC159 (PubMed:38236177). Interacts with isoform 1 and isoform 2 of GGN (PubMed:15642376, PubMed:15892049).</text>
</comment>
<comment type="subcellular location">
    <subcellularLocation>
        <location>Cytoplasm</location>
    </subcellularLocation>
    <subcellularLocation>
        <location>Membrane</location>
        <topology>Peripheral membrane protein</topology>
    </subcellularLocation>
    <subcellularLocation>
        <location>Golgi apparatus</location>
    </subcellularLocation>
    <subcellularLocation>
        <location>Mitochondrion intermembrane space</location>
    </subcellularLocation>
</comment>
<comment type="tissue specificity">
    <text evidence="5">Testis-specific. In the testis, expressed only in germ cells and not in somatic cells. Expression starts in late primary spermatocytes in stage X-XII tubules and gradually increases towards step 1-3 spermatids in stage I-III tubules. Expression then declines continuously and disappears after step 7 spermatids in stage VII tubules (at protein level).</text>
</comment>
<comment type="developmental stage">
    <text evidence="2">Specifically expressed in germ cells tightly related to meiosis. In the developing mouse testis, it is not detected in the testes of 14-day-old mice, when pachytene spermatocytes are still in their early stage, while it is detected in tubules with late pachytene spermatocytes and spermatids in the testes of 21-day-old mice.</text>
</comment>
<comment type="domain">
    <text>The N-terminal domain is required for targeting to the mitochondrion.</text>
</comment>
<protein>
    <recommendedName>
        <fullName>Gametogenetin-binding protein 1</fullName>
    </recommendedName>
</protein>
<organism>
    <name type="scientific">Mus musculus</name>
    <name type="common">Mouse</name>
    <dbReference type="NCBI Taxonomy" id="10090"/>
    <lineage>
        <taxon>Eukaryota</taxon>
        <taxon>Metazoa</taxon>
        <taxon>Chordata</taxon>
        <taxon>Craniata</taxon>
        <taxon>Vertebrata</taxon>
        <taxon>Euteleostomi</taxon>
        <taxon>Mammalia</taxon>
        <taxon>Eutheria</taxon>
        <taxon>Euarchontoglires</taxon>
        <taxon>Glires</taxon>
        <taxon>Rodentia</taxon>
        <taxon>Myomorpha</taxon>
        <taxon>Muroidea</taxon>
        <taxon>Muridae</taxon>
        <taxon>Murinae</taxon>
        <taxon>Mus</taxon>
        <taxon>Mus</taxon>
    </lineage>
</organism>
<accession>Q6K1E7</accession>
<accession>B9WZ58</accession>
<accession>Q8C5T9</accession>
<reference key="1">
    <citation type="journal article" date="2005" name="Mol. Reprod. Dev.">
        <title>Identification and characterization of a novel testicular germ cell-specific gene Ggnbp1.</title>
        <authorList>
            <person name="Zhou Y."/>
            <person name="Zhao Q."/>
            <person name="Bishop C.E."/>
            <person name="Huang P."/>
            <person name="Lu B."/>
        </authorList>
    </citation>
    <scope>NUCLEOTIDE SEQUENCE [MRNA]</scope>
    <scope>SUBCELLULAR LOCATION</scope>
    <scope>DEVELOPMENTAL STAGE</scope>
    <source>
        <strain>C57BL/6J</strain>
    </source>
</reference>
<reference key="2">
    <citation type="journal article" date="2009" name="Biol. Reprod.">
        <title>A novel potential role for gametogenetin-binding protein 1 (GGNBP1) in mitochondrial morphogenesis during spermatogenesis in mice.</title>
        <authorList>
            <person name="Aihara T."/>
            <person name="Nakamura N."/>
            <person name="Honda S."/>
            <person name="Hirose S."/>
        </authorList>
    </citation>
    <scope>NUCLEOTIDE SEQUENCE [MRNA]</scope>
    <scope>FUNCTION</scope>
    <scope>SUBCELLULAR LOCATION</scope>
    <scope>TISSUE SPECIFICITY</scope>
    <source>
        <tissue>Testis</tissue>
    </source>
</reference>
<reference key="3">
    <citation type="journal article" date="2005" name="Science">
        <title>The transcriptional landscape of the mammalian genome.</title>
        <authorList>
            <person name="Carninci P."/>
            <person name="Kasukawa T."/>
            <person name="Katayama S."/>
            <person name="Gough J."/>
            <person name="Frith M.C."/>
            <person name="Maeda N."/>
            <person name="Oyama R."/>
            <person name="Ravasi T."/>
            <person name="Lenhard B."/>
            <person name="Wells C."/>
            <person name="Kodzius R."/>
            <person name="Shimokawa K."/>
            <person name="Bajic V.B."/>
            <person name="Brenner S.E."/>
            <person name="Batalov S."/>
            <person name="Forrest A.R."/>
            <person name="Zavolan M."/>
            <person name="Davis M.J."/>
            <person name="Wilming L.G."/>
            <person name="Aidinis V."/>
            <person name="Allen J.E."/>
            <person name="Ambesi-Impiombato A."/>
            <person name="Apweiler R."/>
            <person name="Aturaliya R.N."/>
            <person name="Bailey T.L."/>
            <person name="Bansal M."/>
            <person name="Baxter L."/>
            <person name="Beisel K.W."/>
            <person name="Bersano T."/>
            <person name="Bono H."/>
            <person name="Chalk A.M."/>
            <person name="Chiu K.P."/>
            <person name="Choudhary V."/>
            <person name="Christoffels A."/>
            <person name="Clutterbuck D.R."/>
            <person name="Crowe M.L."/>
            <person name="Dalla E."/>
            <person name="Dalrymple B.P."/>
            <person name="de Bono B."/>
            <person name="Della Gatta G."/>
            <person name="di Bernardo D."/>
            <person name="Down T."/>
            <person name="Engstrom P."/>
            <person name="Fagiolini M."/>
            <person name="Faulkner G."/>
            <person name="Fletcher C.F."/>
            <person name="Fukushima T."/>
            <person name="Furuno M."/>
            <person name="Futaki S."/>
            <person name="Gariboldi M."/>
            <person name="Georgii-Hemming P."/>
            <person name="Gingeras T.R."/>
            <person name="Gojobori T."/>
            <person name="Green R.E."/>
            <person name="Gustincich S."/>
            <person name="Harbers M."/>
            <person name="Hayashi Y."/>
            <person name="Hensch T.K."/>
            <person name="Hirokawa N."/>
            <person name="Hill D."/>
            <person name="Huminiecki L."/>
            <person name="Iacono M."/>
            <person name="Ikeo K."/>
            <person name="Iwama A."/>
            <person name="Ishikawa T."/>
            <person name="Jakt M."/>
            <person name="Kanapin A."/>
            <person name="Katoh M."/>
            <person name="Kawasawa Y."/>
            <person name="Kelso J."/>
            <person name="Kitamura H."/>
            <person name="Kitano H."/>
            <person name="Kollias G."/>
            <person name="Krishnan S.P."/>
            <person name="Kruger A."/>
            <person name="Kummerfeld S.K."/>
            <person name="Kurochkin I.V."/>
            <person name="Lareau L.F."/>
            <person name="Lazarevic D."/>
            <person name="Lipovich L."/>
            <person name="Liu J."/>
            <person name="Liuni S."/>
            <person name="McWilliam S."/>
            <person name="Madan Babu M."/>
            <person name="Madera M."/>
            <person name="Marchionni L."/>
            <person name="Matsuda H."/>
            <person name="Matsuzawa S."/>
            <person name="Miki H."/>
            <person name="Mignone F."/>
            <person name="Miyake S."/>
            <person name="Morris K."/>
            <person name="Mottagui-Tabar S."/>
            <person name="Mulder N."/>
            <person name="Nakano N."/>
            <person name="Nakauchi H."/>
            <person name="Ng P."/>
            <person name="Nilsson R."/>
            <person name="Nishiguchi S."/>
            <person name="Nishikawa S."/>
            <person name="Nori F."/>
            <person name="Ohara O."/>
            <person name="Okazaki Y."/>
            <person name="Orlando V."/>
            <person name="Pang K.C."/>
            <person name="Pavan W.J."/>
            <person name="Pavesi G."/>
            <person name="Pesole G."/>
            <person name="Petrovsky N."/>
            <person name="Piazza S."/>
            <person name="Reed J."/>
            <person name="Reid J.F."/>
            <person name="Ring B.Z."/>
            <person name="Ringwald M."/>
            <person name="Rost B."/>
            <person name="Ruan Y."/>
            <person name="Salzberg S.L."/>
            <person name="Sandelin A."/>
            <person name="Schneider C."/>
            <person name="Schoenbach C."/>
            <person name="Sekiguchi K."/>
            <person name="Semple C.A."/>
            <person name="Seno S."/>
            <person name="Sessa L."/>
            <person name="Sheng Y."/>
            <person name="Shibata Y."/>
            <person name="Shimada H."/>
            <person name="Shimada K."/>
            <person name="Silva D."/>
            <person name="Sinclair B."/>
            <person name="Sperling S."/>
            <person name="Stupka E."/>
            <person name="Sugiura K."/>
            <person name="Sultana R."/>
            <person name="Takenaka Y."/>
            <person name="Taki K."/>
            <person name="Tammoja K."/>
            <person name="Tan S.L."/>
            <person name="Tang S."/>
            <person name="Taylor M.S."/>
            <person name="Tegner J."/>
            <person name="Teichmann S.A."/>
            <person name="Ueda H.R."/>
            <person name="van Nimwegen E."/>
            <person name="Verardo R."/>
            <person name="Wei C.L."/>
            <person name="Yagi K."/>
            <person name="Yamanishi H."/>
            <person name="Zabarovsky E."/>
            <person name="Zhu S."/>
            <person name="Zimmer A."/>
            <person name="Hide W."/>
            <person name="Bult C."/>
            <person name="Grimmond S.M."/>
            <person name="Teasdale R.D."/>
            <person name="Liu E.T."/>
            <person name="Brusic V."/>
            <person name="Quackenbush J."/>
            <person name="Wahlestedt C."/>
            <person name="Mattick J.S."/>
            <person name="Hume D.A."/>
            <person name="Kai C."/>
            <person name="Sasaki D."/>
            <person name="Tomaru Y."/>
            <person name="Fukuda S."/>
            <person name="Kanamori-Katayama M."/>
            <person name="Suzuki M."/>
            <person name="Aoki J."/>
            <person name="Arakawa T."/>
            <person name="Iida J."/>
            <person name="Imamura K."/>
            <person name="Itoh M."/>
            <person name="Kato T."/>
            <person name="Kawaji H."/>
            <person name="Kawagashira N."/>
            <person name="Kawashima T."/>
            <person name="Kojima M."/>
            <person name="Kondo S."/>
            <person name="Konno H."/>
            <person name="Nakano K."/>
            <person name="Ninomiya N."/>
            <person name="Nishio T."/>
            <person name="Okada M."/>
            <person name="Plessy C."/>
            <person name="Shibata K."/>
            <person name="Shiraki T."/>
            <person name="Suzuki S."/>
            <person name="Tagami M."/>
            <person name="Waki K."/>
            <person name="Watahiki A."/>
            <person name="Okamura-Oho Y."/>
            <person name="Suzuki H."/>
            <person name="Kawai J."/>
            <person name="Hayashizaki Y."/>
        </authorList>
    </citation>
    <scope>NUCLEOTIDE SEQUENCE [LARGE SCALE MRNA]</scope>
    <source>
        <strain>C57BL/6J</strain>
        <tissue>Testis</tissue>
    </source>
</reference>
<reference key="4">
    <citation type="submission" date="2005-07" db="EMBL/GenBank/DDBJ databases">
        <authorList>
            <person name="Mural R.J."/>
            <person name="Adams M.D."/>
            <person name="Myers E.W."/>
            <person name="Smith H.O."/>
            <person name="Venter J.C."/>
        </authorList>
    </citation>
    <scope>NUCLEOTIDE SEQUENCE [LARGE SCALE GENOMIC DNA]</scope>
</reference>
<reference key="5">
    <citation type="journal article" date="2004" name="Genome Res.">
        <title>The status, quality, and expansion of the NIH full-length cDNA project: the Mammalian Gene Collection (MGC).</title>
        <authorList>
            <consortium name="The MGC Project Team"/>
        </authorList>
    </citation>
    <scope>NUCLEOTIDE SEQUENCE [LARGE SCALE MRNA]</scope>
    <source>
        <tissue>Testis</tissue>
    </source>
</reference>
<reference key="6">
    <citation type="journal article" date="2005" name="FEBS Lett.">
        <title>Yeast two-hybrid screens imply that GGNBP1, GGNBP2 and OAZ3 are potential interaction partners of testicular germ cell-specific protein GGN1.</title>
        <authorList>
            <person name="Zhang J."/>
            <person name="Wang Y."/>
            <person name="Zhou Y."/>
            <person name="Cao Z."/>
            <person name="Huang P."/>
            <person name="Lu B."/>
        </authorList>
    </citation>
    <scope>INTERACTION WITH GGN</scope>
    <scope>SUBCELLULAR LOCATION</scope>
</reference>
<reference key="7">
    <citation type="journal article" date="2005" name="Mol. Reprod. Dev.">
        <title>Germ-cell specific protein gametogenetin protein 2 (GGN2), expression in the testis, and association with intracellular membrane.</title>
        <authorList>
            <person name="Zhao Q."/>
            <person name="Zhou Y."/>
            <person name="Cao Z."/>
            <person name="Zhu H."/>
            <person name="Huang P."/>
            <person name="Lu B."/>
        </authorList>
    </citation>
    <scope>INTERACTION WITH GGN</scope>
</reference>
<reference key="8">
    <citation type="journal article" date="2010" name="Cell">
        <title>A tissue-specific atlas of mouse protein phosphorylation and expression.</title>
        <authorList>
            <person name="Huttlin E.L."/>
            <person name="Jedrychowski M.P."/>
            <person name="Elias J.E."/>
            <person name="Goswami T."/>
            <person name="Rad R."/>
            <person name="Beausoleil S.A."/>
            <person name="Villen J."/>
            <person name="Haas W."/>
            <person name="Sowa M.E."/>
            <person name="Gygi S.P."/>
        </authorList>
    </citation>
    <scope>IDENTIFICATION BY MASS SPECTROMETRY [LARGE SCALE ANALYSIS]</scope>
    <source>
        <tissue>Testis</tissue>
    </source>
</reference>
<reference key="9">
    <citation type="journal article" date="2024" name="Biol. Reprod.">
        <title>Coiled-coil domain containing 159 is required for spermatid head and tail assembly in mice.</title>
        <authorList>
            <person name="Ge T."/>
            <person name="Yuan L."/>
            <person name="Xu L."/>
            <person name="Yang F."/>
            <person name="Xu W."/>
            <person name="Niu C."/>
            <person name="Li G."/>
            <person name="Zhou H."/>
            <person name="Zheng Y."/>
        </authorList>
    </citation>
    <scope>INTERACTION WITH CCDC159</scope>
</reference>
<feature type="chain" id="PRO_0000239346" description="Gametogenetin-binding protein 1">
    <location>
        <begin position="1"/>
        <end position="370"/>
    </location>
</feature>
<feature type="region of interest" description="Disordered" evidence="1">
    <location>
        <begin position="26"/>
        <end position="114"/>
    </location>
</feature>
<feature type="region of interest" description="Required for induction of mitochondrial fragmentation">
    <location>
        <begin position="225"/>
        <end position="370"/>
    </location>
</feature>
<feature type="region of interest" description="Disordered" evidence="1">
    <location>
        <begin position="240"/>
        <end position="263"/>
    </location>
</feature>
<feature type="region of interest" description="Interaction with GGN">
    <location>
        <begin position="298"/>
        <end position="370"/>
    </location>
</feature>
<feature type="compositionally biased region" description="Polar residues" evidence="1">
    <location>
        <begin position="31"/>
        <end position="49"/>
    </location>
</feature>
<feature type="compositionally biased region" description="Basic and acidic residues" evidence="1">
    <location>
        <begin position="250"/>
        <end position="260"/>
    </location>
</feature>
<feature type="sequence conflict" description="In Ref. 1; AAN10253." evidence="7" ref="1">
    <original>LKP</original>
    <variation>SKR</variation>
    <location>
        <begin position="207"/>
        <end position="209"/>
    </location>
</feature>
<feature type="sequence conflict" description="In Ref. 1; AAN10253." evidence="7" ref="1">
    <original>A</original>
    <variation>V</variation>
    <location>
        <position position="241"/>
    </location>
</feature>
<sequence>MAAPARTPRSRILGCSSMLRFLRNLVGSKGGSKSTNKPLTRSQPSSSWEQDVVSPMMGHQGGRGRKEPRAKVHSAASSNGKREPPPRVLSAAPSNPRHDAFELGTGDSGSQTLTSKDVPKLRAQGVEVTSVPLRGTWEVLEQLPEKKGEEEEPVGEVSGASDREHFGQALETEQGCLQWVPGPLALTPGAFIKEEEDEHCPIEFGDLKPSSCKVGSTPWNYLLGLYKQLQKSAMAKAQRPAAPQLALKDGLPHEEKGEREEAVDESCPKWCAPRASSDESCPKWCAPRASTYQSPLQKKFRSTDTVGFVESELKKILSVQREARLWKVGNPEGRELLTQPDITLEEAGMVDGQHLLLEEMDEMGNWPPPD</sequence>
<dbReference type="EMBL" id="AY141192">
    <property type="protein sequence ID" value="AAN10253.1"/>
    <property type="molecule type" value="mRNA"/>
</dbReference>
<dbReference type="EMBL" id="AB250379">
    <property type="protein sequence ID" value="BAH22703.1"/>
    <property type="molecule type" value="mRNA"/>
</dbReference>
<dbReference type="EMBL" id="AK077129">
    <property type="protein sequence ID" value="BAC36632.1"/>
    <property type="molecule type" value="mRNA"/>
</dbReference>
<dbReference type="EMBL" id="CH466606">
    <property type="protein sequence ID" value="EDL22529.1"/>
    <property type="molecule type" value="Genomic_DNA"/>
</dbReference>
<dbReference type="EMBL" id="BC049764">
    <property type="protein sequence ID" value="AAH49764.1"/>
    <property type="molecule type" value="mRNA"/>
</dbReference>
<dbReference type="CCDS" id="CCDS28559.1"/>
<dbReference type="RefSeq" id="NP_081820.2">
    <property type="nucleotide sequence ID" value="NM_027544.2"/>
</dbReference>
<dbReference type="SMR" id="Q6K1E7"/>
<dbReference type="BioGRID" id="214246">
    <property type="interactions" value="1"/>
</dbReference>
<dbReference type="FunCoup" id="Q6K1E7">
    <property type="interactions" value="13"/>
</dbReference>
<dbReference type="IntAct" id="Q6K1E7">
    <property type="interactions" value="2"/>
</dbReference>
<dbReference type="MINT" id="Q6K1E7"/>
<dbReference type="STRING" id="10090.ENSMUSP00000051800"/>
<dbReference type="iPTMnet" id="Q6K1E7"/>
<dbReference type="PhosphoSitePlus" id="Q6K1E7"/>
<dbReference type="SwissPalm" id="Q6K1E7"/>
<dbReference type="PaxDb" id="10090-ENSMUSP00000051800"/>
<dbReference type="ProteomicsDB" id="268874"/>
<dbReference type="Ensembl" id="ENSMUST00000053683.7">
    <property type="protein sequence ID" value="ENSMUSP00000051800.7"/>
    <property type="gene ID" value="ENSMUSG00000048731.16"/>
</dbReference>
<dbReference type="GeneID" id="70772"/>
<dbReference type="KEGG" id="mmu:70772"/>
<dbReference type="UCSC" id="uc008bfh.2">
    <property type="organism name" value="mouse"/>
</dbReference>
<dbReference type="AGR" id="MGI:3055306"/>
<dbReference type="CTD" id="449520"/>
<dbReference type="MGI" id="MGI:3055306">
    <property type="gene designation" value="Ggnbp1"/>
</dbReference>
<dbReference type="VEuPathDB" id="HostDB:ENSMUSG00000048731"/>
<dbReference type="eggNOG" id="KOG1870">
    <property type="taxonomic scope" value="Eukaryota"/>
</dbReference>
<dbReference type="GeneTree" id="ENSGT00390000006663"/>
<dbReference type="HOGENOM" id="CLU_816260_0_0_1"/>
<dbReference type="InParanoid" id="Q6K1E7"/>
<dbReference type="OMA" id="VGFMESE"/>
<dbReference type="OrthoDB" id="9937592at2759"/>
<dbReference type="PhylomeDB" id="Q6K1E7"/>
<dbReference type="TreeFam" id="TF339395"/>
<dbReference type="BioGRID-ORCS" id="70772">
    <property type="hits" value="2 hits in 74 CRISPR screens"/>
</dbReference>
<dbReference type="ChiTaRS" id="Ggnbp1">
    <property type="organism name" value="mouse"/>
</dbReference>
<dbReference type="PRO" id="PR:Q6K1E7"/>
<dbReference type="Proteomes" id="UP000000589">
    <property type="component" value="Chromosome 17"/>
</dbReference>
<dbReference type="RNAct" id="Q6K1E7">
    <property type="molecule type" value="protein"/>
</dbReference>
<dbReference type="Bgee" id="ENSMUSG00000048731">
    <property type="expression patterns" value="Expressed in spermatocyte and 105 other cell types or tissues"/>
</dbReference>
<dbReference type="ExpressionAtlas" id="Q6K1E7">
    <property type="expression patterns" value="baseline and differential"/>
</dbReference>
<dbReference type="GO" id="GO:0005794">
    <property type="term" value="C:Golgi apparatus"/>
    <property type="evidence" value="ECO:0000314"/>
    <property type="project" value="MGI"/>
</dbReference>
<dbReference type="GO" id="GO:0005758">
    <property type="term" value="C:mitochondrial intermembrane space"/>
    <property type="evidence" value="ECO:0000314"/>
    <property type="project" value="UniProtKB"/>
</dbReference>
<dbReference type="GO" id="GO:0005886">
    <property type="term" value="C:plasma membrane"/>
    <property type="evidence" value="ECO:0000314"/>
    <property type="project" value="MGI"/>
</dbReference>
<dbReference type="GO" id="GO:0030154">
    <property type="term" value="P:cell differentiation"/>
    <property type="evidence" value="ECO:0007669"/>
    <property type="project" value="UniProtKB-KW"/>
</dbReference>
<dbReference type="GO" id="GO:0000266">
    <property type="term" value="P:mitochondrial fission"/>
    <property type="evidence" value="ECO:0000314"/>
    <property type="project" value="UniProtKB"/>
</dbReference>
<dbReference type="GO" id="GO:0007283">
    <property type="term" value="P:spermatogenesis"/>
    <property type="evidence" value="ECO:0007669"/>
    <property type="project" value="UniProtKB-KW"/>
</dbReference>
<dbReference type="FunFam" id="3.10.20.90:FF:000263">
    <property type="entry name" value="gametogenetin-binding protein 1-like"/>
    <property type="match status" value="1"/>
</dbReference>
<dbReference type="Gene3D" id="3.10.20.90">
    <property type="entry name" value="Phosphatidylinositol 3-kinase Catalytic Subunit, Chain A, domain 1"/>
    <property type="match status" value="1"/>
</dbReference>
<dbReference type="InterPro" id="IPR028135">
    <property type="entry name" value="Ub_USP-typ"/>
</dbReference>
<dbReference type="Pfam" id="PF14836">
    <property type="entry name" value="Ubiquitin_3"/>
    <property type="match status" value="1"/>
</dbReference>
<name>GGNB1_MOUSE</name>
<evidence type="ECO:0000256" key="1">
    <source>
        <dbReference type="SAM" id="MobiDB-lite"/>
    </source>
</evidence>
<evidence type="ECO:0000269" key="2">
    <source>
    </source>
</evidence>
<evidence type="ECO:0000269" key="3">
    <source>
    </source>
</evidence>
<evidence type="ECO:0000269" key="4">
    <source>
    </source>
</evidence>
<evidence type="ECO:0000269" key="5">
    <source>
    </source>
</evidence>
<evidence type="ECO:0000269" key="6">
    <source>
    </source>
</evidence>
<evidence type="ECO:0000305" key="7"/>